<accession>A8F4T9</accession>
<proteinExistence type="inferred from homology"/>
<sequence length="332" mass="37894">MIEYVIPKKLKIEEERSETEYYYARYVLSPMEKGYGTTIGNALRRVLLSSIPSVAIVGIRFIKPEKYHEFDTLPGVKEDILEIILNLKRIQLRADVPVRERVKMTVEKRGPGNLTAADIKVPAGFEIANPSLKIATLDEEADLFFELYAQAGKGFVPAQEMDDHPEIGWIPIDGVFSPVMKVNFRVESARVEKRTDYDKMILEIWTKKTIFPNEALKRAVDILMNHLQIITDSLPEGMPPLTTEFVPISQEEVKVEQTVSEEEAVYSKKIDELELTIRSLNCLRRDKIETIGDLLKRTEEDLLKIKNFGPKSLDEVKQKLLEKFGLSLKKGG</sequence>
<organism>
    <name type="scientific">Pseudothermotoga lettingae (strain ATCC BAA-301 / DSM 14385 / NBRC 107922 / TMO)</name>
    <name type="common">Thermotoga lettingae</name>
    <dbReference type="NCBI Taxonomy" id="416591"/>
    <lineage>
        <taxon>Bacteria</taxon>
        <taxon>Thermotogati</taxon>
        <taxon>Thermotogota</taxon>
        <taxon>Thermotogae</taxon>
        <taxon>Thermotogales</taxon>
        <taxon>Thermotogaceae</taxon>
        <taxon>Pseudothermotoga</taxon>
    </lineage>
</organism>
<feature type="chain" id="PRO_0000323661" description="DNA-directed RNA polymerase subunit alpha">
    <location>
        <begin position="1"/>
        <end position="332"/>
    </location>
</feature>
<feature type="region of interest" description="Alpha N-terminal domain (alpha-NTD)" evidence="1">
    <location>
        <begin position="1"/>
        <end position="234"/>
    </location>
</feature>
<feature type="region of interest" description="Alpha C-terminal domain (alpha-CTD)" evidence="1">
    <location>
        <begin position="264"/>
        <end position="332"/>
    </location>
</feature>
<name>RPOA_PSELT</name>
<gene>
    <name evidence="1" type="primary">rpoA</name>
    <name type="ordered locus">Tlet_0607</name>
</gene>
<comment type="function">
    <text evidence="1">DNA-dependent RNA polymerase catalyzes the transcription of DNA into RNA using the four ribonucleoside triphosphates as substrates.</text>
</comment>
<comment type="catalytic activity">
    <reaction evidence="1">
        <text>RNA(n) + a ribonucleoside 5'-triphosphate = RNA(n+1) + diphosphate</text>
        <dbReference type="Rhea" id="RHEA:21248"/>
        <dbReference type="Rhea" id="RHEA-COMP:14527"/>
        <dbReference type="Rhea" id="RHEA-COMP:17342"/>
        <dbReference type="ChEBI" id="CHEBI:33019"/>
        <dbReference type="ChEBI" id="CHEBI:61557"/>
        <dbReference type="ChEBI" id="CHEBI:140395"/>
        <dbReference type="EC" id="2.7.7.6"/>
    </reaction>
</comment>
<comment type="subunit">
    <text evidence="1">Homodimer. The RNAP catalytic core consists of 2 alpha, 1 beta, 1 beta' and 1 omega subunit. When a sigma factor is associated with the core the holoenzyme is formed, which can initiate transcription.</text>
</comment>
<comment type="domain">
    <text evidence="1">The N-terminal domain is essential for RNAP assembly and basal transcription, whereas the C-terminal domain is involved in interaction with transcriptional regulators and with upstream promoter elements.</text>
</comment>
<comment type="similarity">
    <text evidence="1">Belongs to the RNA polymerase alpha chain family.</text>
</comment>
<keyword id="KW-0240">DNA-directed RNA polymerase</keyword>
<keyword id="KW-0548">Nucleotidyltransferase</keyword>
<keyword id="KW-1185">Reference proteome</keyword>
<keyword id="KW-0804">Transcription</keyword>
<keyword id="KW-0808">Transferase</keyword>
<evidence type="ECO:0000255" key="1">
    <source>
        <dbReference type="HAMAP-Rule" id="MF_00059"/>
    </source>
</evidence>
<protein>
    <recommendedName>
        <fullName evidence="1">DNA-directed RNA polymerase subunit alpha</fullName>
        <shortName evidence="1">RNAP subunit alpha</shortName>
        <ecNumber evidence="1">2.7.7.6</ecNumber>
    </recommendedName>
    <alternativeName>
        <fullName evidence="1">RNA polymerase subunit alpha</fullName>
    </alternativeName>
    <alternativeName>
        <fullName evidence="1">Transcriptase subunit alpha</fullName>
    </alternativeName>
</protein>
<dbReference type="EC" id="2.7.7.6" evidence="1"/>
<dbReference type="EMBL" id="CP000812">
    <property type="protein sequence ID" value="ABV33173.1"/>
    <property type="molecule type" value="Genomic_DNA"/>
</dbReference>
<dbReference type="RefSeq" id="WP_012002654.1">
    <property type="nucleotide sequence ID" value="NZ_BSDV01000001.1"/>
</dbReference>
<dbReference type="SMR" id="A8F4T9"/>
<dbReference type="STRING" id="416591.Tlet_0607"/>
<dbReference type="KEGG" id="tle:Tlet_0607"/>
<dbReference type="eggNOG" id="COG0202">
    <property type="taxonomic scope" value="Bacteria"/>
</dbReference>
<dbReference type="HOGENOM" id="CLU_053084_0_1_0"/>
<dbReference type="OrthoDB" id="9805706at2"/>
<dbReference type="Proteomes" id="UP000002016">
    <property type="component" value="Chromosome"/>
</dbReference>
<dbReference type="GO" id="GO:0005737">
    <property type="term" value="C:cytoplasm"/>
    <property type="evidence" value="ECO:0007669"/>
    <property type="project" value="UniProtKB-ARBA"/>
</dbReference>
<dbReference type="GO" id="GO:0000428">
    <property type="term" value="C:DNA-directed RNA polymerase complex"/>
    <property type="evidence" value="ECO:0007669"/>
    <property type="project" value="UniProtKB-KW"/>
</dbReference>
<dbReference type="GO" id="GO:0003677">
    <property type="term" value="F:DNA binding"/>
    <property type="evidence" value="ECO:0007669"/>
    <property type="project" value="UniProtKB-UniRule"/>
</dbReference>
<dbReference type="GO" id="GO:0003899">
    <property type="term" value="F:DNA-directed RNA polymerase activity"/>
    <property type="evidence" value="ECO:0007669"/>
    <property type="project" value="UniProtKB-UniRule"/>
</dbReference>
<dbReference type="GO" id="GO:0046983">
    <property type="term" value="F:protein dimerization activity"/>
    <property type="evidence" value="ECO:0007669"/>
    <property type="project" value="InterPro"/>
</dbReference>
<dbReference type="GO" id="GO:0006351">
    <property type="term" value="P:DNA-templated transcription"/>
    <property type="evidence" value="ECO:0007669"/>
    <property type="project" value="UniProtKB-UniRule"/>
</dbReference>
<dbReference type="CDD" id="cd06928">
    <property type="entry name" value="RNAP_alpha_NTD"/>
    <property type="match status" value="1"/>
</dbReference>
<dbReference type="FunFam" id="2.170.120.12:FF:000001">
    <property type="entry name" value="DNA-directed RNA polymerase subunit alpha"/>
    <property type="match status" value="1"/>
</dbReference>
<dbReference type="Gene3D" id="1.10.150.20">
    <property type="entry name" value="5' to 3' exonuclease, C-terminal subdomain"/>
    <property type="match status" value="1"/>
</dbReference>
<dbReference type="Gene3D" id="2.170.120.12">
    <property type="entry name" value="DNA-directed RNA polymerase, insert domain"/>
    <property type="match status" value="1"/>
</dbReference>
<dbReference type="Gene3D" id="3.30.1360.10">
    <property type="entry name" value="RNA polymerase, RBP11-like subunit"/>
    <property type="match status" value="1"/>
</dbReference>
<dbReference type="HAMAP" id="MF_00059">
    <property type="entry name" value="RNApol_bact_RpoA"/>
    <property type="match status" value="1"/>
</dbReference>
<dbReference type="InterPro" id="IPR011262">
    <property type="entry name" value="DNA-dir_RNA_pol_insert"/>
</dbReference>
<dbReference type="InterPro" id="IPR011263">
    <property type="entry name" value="DNA-dir_RNA_pol_RpoA/D/Rpb3"/>
</dbReference>
<dbReference type="InterPro" id="IPR011773">
    <property type="entry name" value="DNA-dir_RpoA"/>
</dbReference>
<dbReference type="InterPro" id="IPR036603">
    <property type="entry name" value="RBP11-like"/>
</dbReference>
<dbReference type="InterPro" id="IPR011260">
    <property type="entry name" value="RNAP_asu_C"/>
</dbReference>
<dbReference type="InterPro" id="IPR036643">
    <property type="entry name" value="RNApol_insert_sf"/>
</dbReference>
<dbReference type="NCBIfam" id="NF003513">
    <property type="entry name" value="PRK05182.1-2"/>
    <property type="match status" value="1"/>
</dbReference>
<dbReference type="NCBIfam" id="NF003519">
    <property type="entry name" value="PRK05182.2-5"/>
    <property type="match status" value="1"/>
</dbReference>
<dbReference type="NCBIfam" id="TIGR02027">
    <property type="entry name" value="rpoA"/>
    <property type="match status" value="1"/>
</dbReference>
<dbReference type="Pfam" id="PF01000">
    <property type="entry name" value="RNA_pol_A_bac"/>
    <property type="match status" value="1"/>
</dbReference>
<dbReference type="Pfam" id="PF03118">
    <property type="entry name" value="RNA_pol_A_CTD"/>
    <property type="match status" value="1"/>
</dbReference>
<dbReference type="Pfam" id="PF01193">
    <property type="entry name" value="RNA_pol_L"/>
    <property type="match status" value="1"/>
</dbReference>
<dbReference type="SMART" id="SM00662">
    <property type="entry name" value="RPOLD"/>
    <property type="match status" value="1"/>
</dbReference>
<dbReference type="SUPFAM" id="SSF47789">
    <property type="entry name" value="C-terminal domain of RNA polymerase alpha subunit"/>
    <property type="match status" value="1"/>
</dbReference>
<dbReference type="SUPFAM" id="SSF56553">
    <property type="entry name" value="Insert subdomain of RNA polymerase alpha subunit"/>
    <property type="match status" value="1"/>
</dbReference>
<dbReference type="SUPFAM" id="SSF55257">
    <property type="entry name" value="RBP11-like subunits of RNA polymerase"/>
    <property type="match status" value="1"/>
</dbReference>
<reference key="1">
    <citation type="submission" date="2007-08" db="EMBL/GenBank/DDBJ databases">
        <title>Complete sequence of Thermotoga lettingae TMO.</title>
        <authorList>
            <consortium name="US DOE Joint Genome Institute"/>
            <person name="Copeland A."/>
            <person name="Lucas S."/>
            <person name="Lapidus A."/>
            <person name="Barry K."/>
            <person name="Glavina del Rio T."/>
            <person name="Dalin E."/>
            <person name="Tice H."/>
            <person name="Pitluck S."/>
            <person name="Foster B."/>
            <person name="Bruce D."/>
            <person name="Schmutz J."/>
            <person name="Larimer F."/>
            <person name="Land M."/>
            <person name="Hauser L."/>
            <person name="Kyrpides N."/>
            <person name="Mikhailova N."/>
            <person name="Nelson K."/>
            <person name="Gogarten J.P."/>
            <person name="Noll K."/>
            <person name="Richardson P."/>
        </authorList>
    </citation>
    <scope>NUCLEOTIDE SEQUENCE [LARGE SCALE GENOMIC DNA]</scope>
    <source>
        <strain>ATCC BAA-301 / DSM 14385 / NBRC 107922 / TMO</strain>
    </source>
</reference>